<gene>
    <name evidence="10 13" type="primary">E2F6</name>
</gene>
<reference key="1">
    <citation type="journal article" date="1998" name="Proc. Natl. Acad. Sci. U.S.A.">
        <title>Unusual proliferation arrest and transcriptional control properties of a newly discovered E2F family member, E2F-6.</title>
        <authorList>
            <person name="Gaubatz S."/>
            <person name="Wood J.G."/>
            <person name="Livingston D.M."/>
        </authorList>
    </citation>
    <scope>NUCLEOTIDE SEQUENCE [MRNA] (ISOFORM 1)</scope>
    <scope>FUNCTION</scope>
    <scope>SUBCELLULAR LOCATION</scope>
    <scope>TISSUE SPECIFICITY</scope>
    <scope>MUTAGENESIS OF LEU-68</scope>
</reference>
<reference key="2">
    <citation type="journal article" date="1998" name="Oncogene">
        <title>E2F-6: a novel member of the E2F family is an inhibitor of E2F-dependent transcription.</title>
        <authorList>
            <person name="Cartwright P."/>
            <person name="Mueller H."/>
            <person name="Wagener C."/>
            <person name="Holm K."/>
            <person name="Helin K."/>
        </authorList>
    </citation>
    <scope>NUCLEOTIDE SEQUENCE (ISOFORM 1)</scope>
    <scope>FUNCTION</scope>
    <scope>SUBCELLULAR LOCATION</scope>
</reference>
<reference key="3">
    <citation type="submission" date="2002-03" db="EMBL/GenBank/DDBJ databases">
        <title>Sequence for human E2F-6 alternative transcript.</title>
        <authorList>
            <person name="Salih M."/>
            <person name="Tuana B.S."/>
        </authorList>
    </citation>
    <scope>NUCLEOTIDE SEQUENCE [GENOMIC DNA / MRNA] (ISOFORMS 1 AND 2)</scope>
    <source>
        <tissue>Heart</tissue>
    </source>
</reference>
<reference key="4">
    <citation type="journal article" date="2004" name="Biochem. Biophys. Res. Commun.">
        <title>Human E2F6 is alternatively spliced to generate multiple protein isoforms.</title>
        <authorList>
            <person name="Kherrouche Z."/>
            <person name="De Launoit Y."/>
            <person name="Monte D."/>
        </authorList>
    </citation>
    <scope>NUCLEOTIDE SEQUENCE [MRNA] (ISOFORM 3)</scope>
</reference>
<reference key="5">
    <citation type="submission" date="2002-07" db="EMBL/GenBank/DDBJ databases">
        <title>Cloning, genomic organisation and chromosomal mapping of the human E2F6/EMA gene.</title>
        <authorList>
            <person name="Schwertfeger N."/>
            <person name="Taudien S."/>
            <person name="Truss M."/>
            <person name="Morkel M."/>
            <person name="Pohlers M."/>
            <person name="Gruska I."/>
            <person name="Haaf T."/>
            <person name="Rosenthal A."/>
            <person name="Hagemeier C."/>
        </authorList>
    </citation>
    <scope>NUCLEOTIDE SEQUENCE [GENOMIC DNA]</scope>
</reference>
<reference key="6">
    <citation type="journal article" date="2004" name="Nat. Genet.">
        <title>Complete sequencing and characterization of 21,243 full-length human cDNAs.</title>
        <authorList>
            <person name="Ota T."/>
            <person name="Suzuki Y."/>
            <person name="Nishikawa T."/>
            <person name="Otsuki T."/>
            <person name="Sugiyama T."/>
            <person name="Irie R."/>
            <person name="Wakamatsu A."/>
            <person name="Hayashi K."/>
            <person name="Sato H."/>
            <person name="Nagai K."/>
            <person name="Kimura K."/>
            <person name="Makita H."/>
            <person name="Sekine M."/>
            <person name="Obayashi M."/>
            <person name="Nishi T."/>
            <person name="Shibahara T."/>
            <person name="Tanaka T."/>
            <person name="Ishii S."/>
            <person name="Yamamoto J."/>
            <person name="Saito K."/>
            <person name="Kawai Y."/>
            <person name="Isono Y."/>
            <person name="Nakamura Y."/>
            <person name="Nagahari K."/>
            <person name="Murakami K."/>
            <person name="Yasuda T."/>
            <person name="Iwayanagi T."/>
            <person name="Wagatsuma M."/>
            <person name="Shiratori A."/>
            <person name="Sudo H."/>
            <person name="Hosoiri T."/>
            <person name="Kaku Y."/>
            <person name="Kodaira H."/>
            <person name="Kondo H."/>
            <person name="Sugawara M."/>
            <person name="Takahashi M."/>
            <person name="Kanda K."/>
            <person name="Yokoi T."/>
            <person name="Furuya T."/>
            <person name="Kikkawa E."/>
            <person name="Omura Y."/>
            <person name="Abe K."/>
            <person name="Kamihara K."/>
            <person name="Katsuta N."/>
            <person name="Sato K."/>
            <person name="Tanikawa M."/>
            <person name="Yamazaki M."/>
            <person name="Ninomiya K."/>
            <person name="Ishibashi T."/>
            <person name="Yamashita H."/>
            <person name="Murakawa K."/>
            <person name="Fujimori K."/>
            <person name="Tanai H."/>
            <person name="Kimata M."/>
            <person name="Watanabe M."/>
            <person name="Hiraoka S."/>
            <person name="Chiba Y."/>
            <person name="Ishida S."/>
            <person name="Ono Y."/>
            <person name="Takiguchi S."/>
            <person name="Watanabe S."/>
            <person name="Yosida M."/>
            <person name="Hotuta T."/>
            <person name="Kusano J."/>
            <person name="Kanehori K."/>
            <person name="Takahashi-Fujii A."/>
            <person name="Hara H."/>
            <person name="Tanase T.-O."/>
            <person name="Nomura Y."/>
            <person name="Togiya S."/>
            <person name="Komai F."/>
            <person name="Hara R."/>
            <person name="Takeuchi K."/>
            <person name="Arita M."/>
            <person name="Imose N."/>
            <person name="Musashino K."/>
            <person name="Yuuki H."/>
            <person name="Oshima A."/>
            <person name="Sasaki N."/>
            <person name="Aotsuka S."/>
            <person name="Yoshikawa Y."/>
            <person name="Matsunawa H."/>
            <person name="Ichihara T."/>
            <person name="Shiohata N."/>
            <person name="Sano S."/>
            <person name="Moriya S."/>
            <person name="Momiyama H."/>
            <person name="Satoh N."/>
            <person name="Takami S."/>
            <person name="Terashima Y."/>
            <person name="Suzuki O."/>
            <person name="Nakagawa S."/>
            <person name="Senoh A."/>
            <person name="Mizoguchi H."/>
            <person name="Goto Y."/>
            <person name="Shimizu F."/>
            <person name="Wakebe H."/>
            <person name="Hishigaki H."/>
            <person name="Watanabe T."/>
            <person name="Sugiyama A."/>
            <person name="Takemoto M."/>
            <person name="Kawakami B."/>
            <person name="Yamazaki M."/>
            <person name="Watanabe K."/>
            <person name="Kumagai A."/>
            <person name="Itakura S."/>
            <person name="Fukuzumi Y."/>
            <person name="Fujimori Y."/>
            <person name="Komiyama M."/>
            <person name="Tashiro H."/>
            <person name="Tanigami A."/>
            <person name="Fujiwara T."/>
            <person name="Ono T."/>
            <person name="Yamada K."/>
            <person name="Fujii Y."/>
            <person name="Ozaki K."/>
            <person name="Hirao M."/>
            <person name="Ohmori Y."/>
            <person name="Kawabata A."/>
            <person name="Hikiji T."/>
            <person name="Kobatake N."/>
            <person name="Inagaki H."/>
            <person name="Ikema Y."/>
            <person name="Okamoto S."/>
            <person name="Okitani R."/>
            <person name="Kawakami T."/>
            <person name="Noguchi S."/>
            <person name="Itoh T."/>
            <person name="Shigeta K."/>
            <person name="Senba T."/>
            <person name="Matsumura K."/>
            <person name="Nakajima Y."/>
            <person name="Mizuno T."/>
            <person name="Morinaga M."/>
            <person name="Sasaki M."/>
            <person name="Togashi T."/>
            <person name="Oyama M."/>
            <person name="Hata H."/>
            <person name="Watanabe M."/>
            <person name="Komatsu T."/>
            <person name="Mizushima-Sugano J."/>
            <person name="Satoh T."/>
            <person name="Shirai Y."/>
            <person name="Takahashi Y."/>
            <person name="Nakagawa K."/>
            <person name="Okumura K."/>
            <person name="Nagase T."/>
            <person name="Nomura N."/>
            <person name="Kikuchi H."/>
            <person name="Masuho Y."/>
            <person name="Yamashita R."/>
            <person name="Nakai K."/>
            <person name="Yada T."/>
            <person name="Nakamura Y."/>
            <person name="Ohara O."/>
            <person name="Isogai T."/>
            <person name="Sugano S."/>
        </authorList>
    </citation>
    <scope>NUCLEOTIDE SEQUENCE [LARGE SCALE MRNA] (ISOFORM 1)</scope>
    <source>
        <tissue>Umbilical cord blood</tissue>
    </source>
</reference>
<reference key="7">
    <citation type="journal article" date="2005" name="Nature">
        <title>Generation and annotation of the DNA sequences of human chromosomes 2 and 4.</title>
        <authorList>
            <person name="Hillier L.W."/>
            <person name="Graves T.A."/>
            <person name="Fulton R.S."/>
            <person name="Fulton L.A."/>
            <person name="Pepin K.H."/>
            <person name="Minx P."/>
            <person name="Wagner-McPherson C."/>
            <person name="Layman D."/>
            <person name="Wylie K."/>
            <person name="Sekhon M."/>
            <person name="Becker M.C."/>
            <person name="Fewell G.A."/>
            <person name="Delehaunty K.D."/>
            <person name="Miner T.L."/>
            <person name="Nash W.E."/>
            <person name="Kremitzki C."/>
            <person name="Oddy L."/>
            <person name="Du H."/>
            <person name="Sun H."/>
            <person name="Bradshaw-Cordum H."/>
            <person name="Ali J."/>
            <person name="Carter J."/>
            <person name="Cordes M."/>
            <person name="Harris A."/>
            <person name="Isak A."/>
            <person name="van Brunt A."/>
            <person name="Nguyen C."/>
            <person name="Du F."/>
            <person name="Courtney L."/>
            <person name="Kalicki J."/>
            <person name="Ozersky P."/>
            <person name="Abbott S."/>
            <person name="Armstrong J."/>
            <person name="Belter E.A."/>
            <person name="Caruso L."/>
            <person name="Cedroni M."/>
            <person name="Cotton M."/>
            <person name="Davidson T."/>
            <person name="Desai A."/>
            <person name="Elliott G."/>
            <person name="Erb T."/>
            <person name="Fronick C."/>
            <person name="Gaige T."/>
            <person name="Haakenson W."/>
            <person name="Haglund K."/>
            <person name="Holmes A."/>
            <person name="Harkins R."/>
            <person name="Kim K."/>
            <person name="Kruchowski S.S."/>
            <person name="Strong C.M."/>
            <person name="Grewal N."/>
            <person name="Goyea E."/>
            <person name="Hou S."/>
            <person name="Levy A."/>
            <person name="Martinka S."/>
            <person name="Mead K."/>
            <person name="McLellan M.D."/>
            <person name="Meyer R."/>
            <person name="Randall-Maher J."/>
            <person name="Tomlinson C."/>
            <person name="Dauphin-Kohlberg S."/>
            <person name="Kozlowicz-Reilly A."/>
            <person name="Shah N."/>
            <person name="Swearengen-Shahid S."/>
            <person name="Snider J."/>
            <person name="Strong J.T."/>
            <person name="Thompson J."/>
            <person name="Yoakum M."/>
            <person name="Leonard S."/>
            <person name="Pearman C."/>
            <person name="Trani L."/>
            <person name="Radionenko M."/>
            <person name="Waligorski J.E."/>
            <person name="Wang C."/>
            <person name="Rock S.M."/>
            <person name="Tin-Wollam A.-M."/>
            <person name="Maupin R."/>
            <person name="Latreille P."/>
            <person name="Wendl M.C."/>
            <person name="Yang S.-P."/>
            <person name="Pohl C."/>
            <person name="Wallis J.W."/>
            <person name="Spieth J."/>
            <person name="Bieri T.A."/>
            <person name="Berkowicz N."/>
            <person name="Nelson J.O."/>
            <person name="Osborne J."/>
            <person name="Ding L."/>
            <person name="Meyer R."/>
            <person name="Sabo A."/>
            <person name="Shotland Y."/>
            <person name="Sinha P."/>
            <person name="Wohldmann P.E."/>
            <person name="Cook L.L."/>
            <person name="Hickenbotham M.T."/>
            <person name="Eldred J."/>
            <person name="Williams D."/>
            <person name="Jones T.A."/>
            <person name="She X."/>
            <person name="Ciccarelli F.D."/>
            <person name="Izaurralde E."/>
            <person name="Taylor J."/>
            <person name="Schmutz J."/>
            <person name="Myers R.M."/>
            <person name="Cox D.R."/>
            <person name="Huang X."/>
            <person name="McPherson J.D."/>
            <person name="Mardis E.R."/>
            <person name="Clifton S.W."/>
            <person name="Warren W.C."/>
            <person name="Chinwalla A.T."/>
            <person name="Eddy S.R."/>
            <person name="Marra M.A."/>
            <person name="Ovcharenko I."/>
            <person name="Furey T.S."/>
            <person name="Miller W."/>
            <person name="Eichler E.E."/>
            <person name="Bork P."/>
            <person name="Suyama M."/>
            <person name="Torrents D."/>
            <person name="Waterston R.H."/>
            <person name="Wilson R.K."/>
        </authorList>
    </citation>
    <scope>NUCLEOTIDE SEQUENCE [LARGE SCALE GENOMIC DNA]</scope>
</reference>
<reference key="8">
    <citation type="submission" date="2005-07" db="EMBL/GenBank/DDBJ databases">
        <authorList>
            <person name="Mural R.J."/>
            <person name="Istrail S."/>
            <person name="Sutton G.G."/>
            <person name="Florea L."/>
            <person name="Halpern A.L."/>
            <person name="Mobarry C.M."/>
            <person name="Lippert R."/>
            <person name="Walenz B."/>
            <person name="Shatkay H."/>
            <person name="Dew I."/>
            <person name="Miller J.R."/>
            <person name="Flanigan M.J."/>
            <person name="Edwards N.J."/>
            <person name="Bolanos R."/>
            <person name="Fasulo D."/>
            <person name="Halldorsson B.V."/>
            <person name="Hannenhalli S."/>
            <person name="Turner R."/>
            <person name="Yooseph S."/>
            <person name="Lu F."/>
            <person name="Nusskern D.R."/>
            <person name="Shue B.C."/>
            <person name="Zheng X.H."/>
            <person name="Zhong F."/>
            <person name="Delcher A.L."/>
            <person name="Huson D.H."/>
            <person name="Kravitz S.A."/>
            <person name="Mouchard L."/>
            <person name="Reinert K."/>
            <person name="Remington K.A."/>
            <person name="Clark A.G."/>
            <person name="Waterman M.S."/>
            <person name="Eichler E.E."/>
            <person name="Adams M.D."/>
            <person name="Hunkapiller M.W."/>
            <person name="Myers E.W."/>
            <person name="Venter J.C."/>
        </authorList>
    </citation>
    <scope>NUCLEOTIDE SEQUENCE [LARGE SCALE GENOMIC DNA]</scope>
</reference>
<reference key="9">
    <citation type="journal article" date="2004" name="Genome Res.">
        <title>The status, quality, and expansion of the NIH full-length cDNA project: the Mammalian Gene Collection (MGC).</title>
        <authorList>
            <consortium name="The MGC Project Team"/>
        </authorList>
    </citation>
    <scope>NUCLEOTIDE SEQUENCE [LARGE SCALE MRNA] (ISOFORM 1)</scope>
    <source>
        <tissue>Lung</tissue>
    </source>
</reference>
<reference key="10">
    <citation type="journal article" date="1998" name="Proc. Natl. Acad. Sci. U.S.A.">
        <title>E2F-6, a member of the E2F family that can behave as a transcriptional repressor.</title>
        <authorList>
            <person name="Trimarchi J.M."/>
            <person name="Fairchild B."/>
            <person name="Verona R."/>
            <person name="Moberg K."/>
            <person name="Andon N."/>
            <person name="Lees J.A."/>
        </authorList>
    </citation>
    <scope>NUCLEOTIDE SEQUENCE [MRNA] OF 7-281 (ISOFORM 1)</scope>
    <scope>FUNCTION</scope>
    <source>
        <tissue>Fetal brain</tissue>
    </source>
</reference>
<reference key="11">
    <citation type="journal article" date="2002" name="Science">
        <title>A complex with chromatin modifiers that occupies E2F- and Myc-responsive genes in G0 cells.</title>
        <authorList>
            <person name="Ogawa H."/>
            <person name="Ishiguro K."/>
            <person name="Gaubatz S."/>
            <person name="Livingston D.M."/>
            <person name="Nakatani Y."/>
        </authorList>
    </citation>
    <scope>IDENTIFICATION IN COMPLEX WITH TFDP1; MAX; MGA; EUHMTASE1; BAT8; CBX3; RING1; RNF2; MBLR; L3MBTL2 AND YAF2</scope>
</reference>
<reference key="12">
    <citation type="journal article" date="2005" name="Cell">
        <title>Physical association and coordinate function of the H3 K4 methyltransferase MLL1 and the H4 K16 acetyltransferase MOF.</title>
        <authorList>
            <person name="Dou Y."/>
            <person name="Milne T.A."/>
            <person name="Tackett A.J."/>
            <person name="Smith E.R."/>
            <person name="Fukuda A."/>
            <person name="Wysocka J."/>
            <person name="Allis C.D."/>
            <person name="Chait B.T."/>
            <person name="Hess J.L."/>
            <person name="Roeder R.G."/>
        </authorList>
    </citation>
    <scope>IDENTIFICATION IN THE MLL1/MLL COMPLEX</scope>
</reference>
<reference key="13">
    <citation type="journal article" date="2017" name="Nat. Struct. Mol. Biol.">
        <title>Site-specific mapping of the human SUMO proteome reveals co-modification with phosphorylation.</title>
        <authorList>
            <person name="Hendriks I.A."/>
            <person name="Lyon D."/>
            <person name="Young C."/>
            <person name="Jensen L.J."/>
            <person name="Vertegaal A.C."/>
            <person name="Nielsen M.L."/>
        </authorList>
    </citation>
    <scope>SUMOYLATION [LARGE SCALE ANALYSIS] AT LYS-9</scope>
    <scope>IDENTIFICATION BY MASS SPECTROMETRY [LARGE SCALE ANALYSIS]</scope>
</reference>
<organism>
    <name type="scientific">Homo sapiens</name>
    <name type="common">Human</name>
    <dbReference type="NCBI Taxonomy" id="9606"/>
    <lineage>
        <taxon>Eukaryota</taxon>
        <taxon>Metazoa</taxon>
        <taxon>Chordata</taxon>
        <taxon>Craniata</taxon>
        <taxon>Vertebrata</taxon>
        <taxon>Euteleostomi</taxon>
        <taxon>Mammalia</taxon>
        <taxon>Eutheria</taxon>
        <taxon>Euarchontoglires</taxon>
        <taxon>Primates</taxon>
        <taxon>Haplorrhini</taxon>
        <taxon>Catarrhini</taxon>
        <taxon>Hominidae</taxon>
        <taxon>Homo</taxon>
    </lineage>
</organism>
<comment type="function">
    <text evidence="1 6 7 8">Inhibitor of E2F-dependent transcription (PubMed:9501179, PubMed:9689056, PubMed:9704927). Binds DNA cooperatively with DP proteins through the E2 recognition site, 5'-TTTC[CG]CGC-3' (PubMed:9501179). Has a preference for the 5'-TTTCCCGC-3' E2F recognition site (PubMed:9501179). E2F6 lacks the transcriptional activation and pocket protein binding domains (PubMed:9501179, PubMed:9704927). Appears to regulate a subset of E2F-dependent genes whose products are required for entry into the cell cycle but not for normal cell cycle progression (PubMed:9501179, PubMed:9689056). Represses expression of some meiosis-specific genes, including SLC25A31/ANT4 (By similarity). May silence expression via the recruitment of a chromatin remodeling complex containing histone H3-K9 methyltransferase activity. Overexpression delays the exit of cells from the S-phase (PubMed:9501179).</text>
</comment>
<comment type="subunit">
    <text evidence="4 5 8">Forms heterodimers with DP family members TFDP1 or TFDP2 (PubMed:9704927). Component of the DRTF1/E2F transcription factor complex (PubMed:12004135). Part of the E2F6.com-1 complex in G0 phase composed of E2F6, MGA, MAX, TFDP1, CBX3, BAT8, EUHMTASE1, RING1, RNF2, MBLR, L3MBTL2 and YAF2 (PubMed:12004135). Component of some MLL1/MLL complex, at least composed of the core components KMT2A/MLL1, ASH2L, HCFC1/HCF1, WDR5 and RBBP5, as well as the facultative components BACC1, CHD8, E2F6, HSP70, INO80C, KANSL1, LAS1L, MAX, MCRS1, MGA, KAT8/MOF, PELP1, PHF20, PRP31, RING2, RUVB1/TIP49A, RUVB2/TIP49B, SENP3, TAF1, TAF4, TAF6, TAF7, TAF9 and TEX10 (PubMed:15960975).</text>
</comment>
<comment type="interaction">
    <interactant intactId="EBI-749694">
        <id>O75461</id>
    </interactant>
    <interactant intactId="EBI-10172290">
        <id>P60409</id>
        <label>KRTAP10-7</label>
    </interactant>
    <organismsDiffer>false</organismsDiffer>
    <experiments>3</experiments>
</comment>
<comment type="interaction">
    <interactant intactId="EBI-749694">
        <id>O75461</id>
    </interactant>
    <interactant intactId="EBI-751711">
        <id>P61244</id>
        <label>MAX</label>
    </interactant>
    <organismsDiffer>false</organismsDiffer>
    <experiments>6</experiments>
</comment>
<comment type="interaction">
    <interactant intactId="EBI-749694">
        <id>O75461</id>
    </interactant>
    <interactant intactId="EBI-7413767">
        <id>Q9Y242</id>
        <label>TCF19</label>
    </interactant>
    <organismsDiffer>false</organismsDiffer>
    <experiments>3</experiments>
</comment>
<comment type="interaction">
    <interactant intactId="EBI-749694">
        <id>O75461</id>
    </interactant>
    <interactant intactId="EBI-749713">
        <id>Q14186</id>
        <label>TFDP1</label>
    </interactant>
    <organismsDiffer>false</organismsDiffer>
    <experiments>24</experiments>
</comment>
<comment type="interaction">
    <interactant intactId="EBI-749694">
        <id>O75461</id>
    </interactant>
    <interactant intactId="EBI-752268">
        <id>Q14188</id>
        <label>TFDP2</label>
    </interactant>
    <organismsDiffer>false</organismsDiffer>
    <experiments>11</experiments>
</comment>
<comment type="interaction">
    <interactant intactId="EBI-749694">
        <id>O75461</id>
    </interactant>
    <interactant intactId="EBI-12181237">
        <id>Q14188-5</id>
        <label>TFDP2</label>
    </interactant>
    <organismsDiffer>false</organismsDiffer>
    <experiments>11</experiments>
</comment>
<comment type="subcellular location">
    <subcellularLocation>
        <location evidence="7 8">Nucleus</location>
    </subcellularLocation>
</comment>
<comment type="alternative products">
    <event type="alternative splicing"/>
    <isoform>
        <id>O75461-1</id>
        <name>1</name>
        <sequence type="displayed"/>
    </isoform>
    <isoform>
        <id>O75461-2</id>
        <name>2</name>
        <sequence type="described" ref="VSP_008771"/>
    </isoform>
    <isoform>
        <id>O75461-3</id>
        <name>3</name>
        <sequence type="described" ref="VSP_054754"/>
    </isoform>
</comment>
<comment type="tissue specificity">
    <text evidence="7">Expressed in all tissues examined. Highest levels in placenta, skeletal muscle, heart, ovary, kidney, small intestine and spleen.</text>
</comment>
<comment type="similarity">
    <text evidence="12">Belongs to the E2F/DP family.</text>
</comment>
<comment type="online information" name="Atlas of Genetics and Cytogenetics in Oncology and Haematology">
    <link uri="https://atlasgeneticsoncology.org/gene/521/E2F6"/>
</comment>
<feature type="chain" id="PRO_0000219472" description="Transcription factor E2F6">
    <location>
        <begin position="1"/>
        <end position="281"/>
    </location>
</feature>
<feature type="DNA-binding region" evidence="2">
    <location>
        <begin position="50"/>
        <end position="129"/>
    </location>
</feature>
<feature type="region of interest" description="Dimerization" evidence="2">
    <location>
        <begin position="130"/>
        <end position="222"/>
    </location>
</feature>
<feature type="region of interest" description="Leucine-zipper">
    <location>
        <begin position="143"/>
        <end position="164"/>
    </location>
</feature>
<feature type="region of interest" description="Transcription repression">
    <location>
        <begin position="173"/>
        <end position="281"/>
    </location>
</feature>
<feature type="region of interest" description="Disordered" evidence="3">
    <location>
        <begin position="241"/>
        <end position="281"/>
    </location>
</feature>
<feature type="short sequence motif" description="DEF box">
    <location>
        <begin position="95"/>
        <end position="129"/>
    </location>
</feature>
<feature type="cross-link" description="Glycyl lysine isopeptide (Lys-Gly) (interchain with G-Cter in SUMO2)" evidence="14">
    <location>
        <position position="9"/>
    </location>
</feature>
<feature type="splice variant" id="VSP_008771" description="In isoform 2." evidence="11">
    <location>
        <begin position="1"/>
        <end position="75"/>
    </location>
</feature>
<feature type="splice variant" id="VSP_054754" description="In isoform 3." evidence="9">
    <original>MSQQRPARKLPSLLLDPTEETVRRRCRDPINVEGLL</original>
    <variation>MNPS</variation>
    <location>
        <begin position="1"/>
        <end position="36"/>
    </location>
</feature>
<feature type="mutagenesis site" description="Reduction in repressor activity, little effect on S-phase entry." evidence="7">
    <original>L</original>
    <variation>E</variation>
    <location>
        <position position="68"/>
    </location>
</feature>
<feature type="sequence conflict" description="In Ref. 10; AAC14694." evidence="12" ref="10">
    <original>AR</original>
    <variation>HE</variation>
    <location>
        <begin position="7"/>
        <end position="8"/>
    </location>
</feature>
<feature type="sequence conflict" description="In Ref. 4; AAT02637." evidence="12" ref="4">
    <original>V</original>
    <variation>A</variation>
    <location>
        <position position="66"/>
    </location>
</feature>
<feature type="sequence conflict" description="In Ref. 10; AAC14694." evidence="12" ref="10">
    <original>I</original>
    <variation>V</variation>
    <location>
        <position position="220"/>
    </location>
</feature>
<feature type="sequence conflict" description="In Ref. 10; AAC14694." evidence="12" ref="10">
    <original>G</original>
    <variation>E</variation>
    <location>
        <position position="229"/>
    </location>
</feature>
<evidence type="ECO:0000250" key="1">
    <source>
        <dbReference type="UniProtKB" id="O54917"/>
    </source>
</evidence>
<evidence type="ECO:0000255" key="2"/>
<evidence type="ECO:0000256" key="3">
    <source>
        <dbReference type="SAM" id="MobiDB-lite"/>
    </source>
</evidence>
<evidence type="ECO:0000269" key="4">
    <source>
    </source>
</evidence>
<evidence type="ECO:0000269" key="5">
    <source>
    </source>
</evidence>
<evidence type="ECO:0000269" key="6">
    <source>
    </source>
</evidence>
<evidence type="ECO:0000269" key="7">
    <source>
    </source>
</evidence>
<evidence type="ECO:0000269" key="8">
    <source>
    </source>
</evidence>
<evidence type="ECO:0000303" key="9">
    <source>
    </source>
</evidence>
<evidence type="ECO:0000303" key="10">
    <source>
    </source>
</evidence>
<evidence type="ECO:0000303" key="11">
    <source ref="3"/>
</evidence>
<evidence type="ECO:0000305" key="12"/>
<evidence type="ECO:0000312" key="13">
    <source>
        <dbReference type="HGNC" id="HGNC:3120"/>
    </source>
</evidence>
<evidence type="ECO:0007744" key="14">
    <source>
    </source>
</evidence>
<keyword id="KW-0025">Alternative splicing</keyword>
<keyword id="KW-0131">Cell cycle</keyword>
<keyword id="KW-0238">DNA-binding</keyword>
<keyword id="KW-1017">Isopeptide bond</keyword>
<keyword id="KW-0539">Nucleus</keyword>
<keyword id="KW-1267">Proteomics identification</keyword>
<keyword id="KW-1185">Reference proteome</keyword>
<keyword id="KW-0678">Repressor</keyword>
<keyword id="KW-0804">Transcription</keyword>
<keyword id="KW-0805">Transcription regulation</keyword>
<keyword id="KW-0832">Ubl conjugation</keyword>
<protein>
    <recommendedName>
        <fullName evidence="12">Transcription factor E2F6</fullName>
        <shortName evidence="10">E2F-6</shortName>
    </recommendedName>
</protein>
<sequence>MSQQRPARKLPSLLLDPTEETVRRRCRDPINVEGLLPSKIRINLEDNVQYVSMRKALKVKRPRFDVSLVYLTRKFMDLVRSAPGGILDLNKVATKLGVRKRRVYDITNVLDGIDLVEKKSKNHIRWIGSDLSNFGAVPQQKKLQEELSDLSAMEDALDELIKDCAQQLFELTDDKENERLAYVTYQDIHSIQAFHEQIVIAVKAPAETRLDVPAPREDSITVHIRSTNGPIDVYLCEVEQGQTSNKRSEGVGTSSSESTHPEGPEEEENPQQSEELLEVSN</sequence>
<proteinExistence type="evidence at protein level"/>
<dbReference type="EMBL" id="AF059292">
    <property type="protein sequence ID" value="AAC31426.1"/>
    <property type="molecule type" value="mRNA"/>
</dbReference>
<dbReference type="EMBL" id="AY083996">
    <property type="protein sequence ID" value="AAM10783.1"/>
    <property type="molecule type" value="mRNA"/>
</dbReference>
<dbReference type="EMBL" id="AY083997">
    <property type="protein sequence ID" value="AAM10784.1"/>
    <property type="molecule type" value="Genomic_DNA"/>
</dbReference>
<dbReference type="EMBL" id="AY083997">
    <property type="protein sequence ID" value="AAM10785.1"/>
    <property type="molecule type" value="Genomic_DNA"/>
</dbReference>
<dbReference type="EMBL" id="AY551347">
    <property type="protein sequence ID" value="AAT02637.1"/>
    <property type="molecule type" value="mRNA"/>
</dbReference>
<dbReference type="EMBL" id="AJ493061">
    <property type="protein sequence ID" value="CAD37950.1"/>
    <property type="molecule type" value="Genomic_DNA"/>
</dbReference>
<dbReference type="EMBL" id="AK290413">
    <property type="protein sequence ID" value="BAF83102.1"/>
    <property type="molecule type" value="mRNA"/>
</dbReference>
<dbReference type="EMBL" id="AC099344">
    <property type="protein sequence ID" value="AAY14826.1"/>
    <property type="molecule type" value="Genomic_DNA"/>
</dbReference>
<dbReference type="EMBL" id="CH471053">
    <property type="protein sequence ID" value="EAX00931.1"/>
    <property type="molecule type" value="Genomic_DNA"/>
</dbReference>
<dbReference type="EMBL" id="BC008348">
    <property type="protein sequence ID" value="AAH08348.1"/>
    <property type="molecule type" value="mRNA"/>
</dbReference>
<dbReference type="EMBL" id="BC107740">
    <property type="protein sequence ID" value="AAI07741.1"/>
    <property type="molecule type" value="mRNA"/>
</dbReference>
<dbReference type="EMBL" id="AF041381">
    <property type="protein sequence ID" value="AAC14694.1"/>
    <property type="molecule type" value="mRNA"/>
</dbReference>
<dbReference type="CCDS" id="CCDS1680.2">
    <molecule id="O75461-1"/>
</dbReference>
<dbReference type="CCDS" id="CCDS62858.1">
    <molecule id="O75461-2"/>
</dbReference>
<dbReference type="CCDS" id="CCDS62859.1">
    <molecule id="O75461-3"/>
</dbReference>
<dbReference type="RefSeq" id="NP_001265204.1">
    <molecule id="O75461-3"/>
    <property type="nucleotide sequence ID" value="NM_001278275.2"/>
</dbReference>
<dbReference type="RefSeq" id="NP_001265205.1">
    <molecule id="O75461-2"/>
    <property type="nucleotide sequence ID" value="NM_001278276.2"/>
</dbReference>
<dbReference type="RefSeq" id="NP_001265206.1">
    <molecule id="O75461-2"/>
    <property type="nucleotide sequence ID" value="NM_001278277.2"/>
</dbReference>
<dbReference type="RefSeq" id="NP_001265207.1">
    <molecule id="O75461-2"/>
    <property type="nucleotide sequence ID" value="NM_001278278.2"/>
</dbReference>
<dbReference type="RefSeq" id="NP_937987.2">
    <molecule id="O75461-1"/>
    <property type="nucleotide sequence ID" value="NM_198256.4"/>
</dbReference>
<dbReference type="RefSeq" id="XP_047299557.1">
    <molecule id="O75461-3"/>
    <property type="nucleotide sequence ID" value="XM_047443601.1"/>
</dbReference>
<dbReference type="RefSeq" id="XP_054196895.1">
    <molecule id="O75461-3"/>
    <property type="nucleotide sequence ID" value="XM_054340920.1"/>
</dbReference>
<dbReference type="SMR" id="O75461"/>
<dbReference type="BioGRID" id="108208">
    <property type="interactions" value="199"/>
</dbReference>
<dbReference type="ComplexPortal" id="CPX-2552">
    <property type="entry name" value="E2F6-DP1 transcriptional repressor complex"/>
</dbReference>
<dbReference type="CORUM" id="O75461"/>
<dbReference type="DIP" id="DIP-41699N"/>
<dbReference type="FunCoup" id="O75461">
    <property type="interactions" value="2433"/>
</dbReference>
<dbReference type="IntAct" id="O75461">
    <property type="interactions" value="113"/>
</dbReference>
<dbReference type="MINT" id="O75461"/>
<dbReference type="STRING" id="9606.ENSP00000370936"/>
<dbReference type="ChEMBL" id="CHEMBL4630726"/>
<dbReference type="GlyGen" id="O75461">
    <property type="glycosylation" value="1 site, 1 O-linked glycan (1 site)"/>
</dbReference>
<dbReference type="iPTMnet" id="O75461"/>
<dbReference type="PhosphoSitePlus" id="O75461"/>
<dbReference type="BioMuta" id="E2F6"/>
<dbReference type="jPOST" id="O75461"/>
<dbReference type="MassIVE" id="O75461"/>
<dbReference type="PaxDb" id="9606-ENSP00000370936"/>
<dbReference type="PeptideAtlas" id="O75461"/>
<dbReference type="ProteomicsDB" id="33817"/>
<dbReference type="ProteomicsDB" id="50023">
    <molecule id="O75461-1"/>
</dbReference>
<dbReference type="ProteomicsDB" id="50024">
    <molecule id="O75461-2"/>
</dbReference>
<dbReference type="Pumba" id="O75461"/>
<dbReference type="Antibodypedia" id="12671">
    <property type="antibodies" value="332 antibodies from 36 providers"/>
</dbReference>
<dbReference type="DNASU" id="1876"/>
<dbReference type="Ensembl" id="ENST00000307236.8">
    <molecule id="O75461-3"/>
    <property type="protein sequence ID" value="ENSP00000302159.4"/>
    <property type="gene ID" value="ENSG00000169016.17"/>
</dbReference>
<dbReference type="Ensembl" id="ENST00000381525.8">
    <molecule id="O75461-1"/>
    <property type="protein sequence ID" value="ENSP00000370936.3"/>
    <property type="gene ID" value="ENSG00000169016.17"/>
</dbReference>
<dbReference type="Ensembl" id="ENST00000542100.5">
    <molecule id="O75461-2"/>
    <property type="protein sequence ID" value="ENSP00000446315.1"/>
    <property type="gene ID" value="ENSG00000169016.17"/>
</dbReference>
<dbReference type="Ensembl" id="ENST00000546212.2">
    <molecule id="O75461-2"/>
    <property type="protein sequence ID" value="ENSP00000438864.1"/>
    <property type="gene ID" value="ENSG00000169016.17"/>
</dbReference>
<dbReference type="GeneID" id="1876"/>
<dbReference type="KEGG" id="hsa:1876"/>
<dbReference type="MANE-Select" id="ENST00000381525.8">
    <property type="protein sequence ID" value="ENSP00000370936.3"/>
    <property type="RefSeq nucleotide sequence ID" value="NM_198256.4"/>
    <property type="RefSeq protein sequence ID" value="NP_937987.2"/>
</dbReference>
<dbReference type="UCSC" id="uc002rbf.4">
    <molecule id="O75461-1"/>
    <property type="organism name" value="human"/>
</dbReference>
<dbReference type="AGR" id="HGNC:3120"/>
<dbReference type="CTD" id="1876"/>
<dbReference type="DisGeNET" id="1876"/>
<dbReference type="GeneCards" id="E2F6"/>
<dbReference type="HGNC" id="HGNC:3120">
    <property type="gene designation" value="E2F6"/>
</dbReference>
<dbReference type="HPA" id="ENSG00000169016">
    <property type="expression patterns" value="Low tissue specificity"/>
</dbReference>
<dbReference type="MIM" id="602944">
    <property type="type" value="gene"/>
</dbReference>
<dbReference type="neXtProt" id="NX_O75461"/>
<dbReference type="OpenTargets" id="ENSG00000169016"/>
<dbReference type="PharmGKB" id="PA27578"/>
<dbReference type="VEuPathDB" id="HostDB:ENSG00000169016"/>
<dbReference type="eggNOG" id="KOG2577">
    <property type="taxonomic scope" value="Eukaryota"/>
</dbReference>
<dbReference type="GeneTree" id="ENSGT00940000155734"/>
<dbReference type="HOGENOM" id="CLU_032091_4_0_1"/>
<dbReference type="InParanoid" id="O75461"/>
<dbReference type="OMA" id="XPSKIRI"/>
<dbReference type="OrthoDB" id="1743261at2759"/>
<dbReference type="PAN-GO" id="O75461">
    <property type="GO annotations" value="4 GO annotations based on evolutionary models"/>
</dbReference>
<dbReference type="PhylomeDB" id="O75461"/>
<dbReference type="TreeFam" id="TF105566"/>
<dbReference type="PathwayCommons" id="O75461"/>
<dbReference type="Reactome" id="R-HSA-69205">
    <property type="pathway name" value="G1/S-Specific Transcription"/>
</dbReference>
<dbReference type="Reactome" id="R-HSA-8953750">
    <property type="pathway name" value="Transcriptional Regulation by E2F6"/>
</dbReference>
<dbReference type="SignaLink" id="O75461"/>
<dbReference type="SIGNOR" id="O75461"/>
<dbReference type="BioGRID-ORCS" id="1876">
    <property type="hits" value="182 hits in 1179 CRISPR screens"/>
</dbReference>
<dbReference type="GenomeRNAi" id="1876"/>
<dbReference type="Pharos" id="O75461">
    <property type="development level" value="Tbio"/>
</dbReference>
<dbReference type="PRO" id="PR:O75461"/>
<dbReference type="Proteomes" id="UP000005640">
    <property type="component" value="Chromosome 2"/>
</dbReference>
<dbReference type="RNAct" id="O75461">
    <property type="molecule type" value="protein"/>
</dbReference>
<dbReference type="Bgee" id="ENSG00000169016">
    <property type="expression patterns" value="Expressed in primordial germ cell in gonad and 104 other cell types or tissues"/>
</dbReference>
<dbReference type="ExpressionAtlas" id="O75461">
    <property type="expression patterns" value="baseline and differential"/>
</dbReference>
<dbReference type="GO" id="GO:0000785">
    <property type="term" value="C:chromatin"/>
    <property type="evidence" value="ECO:0000247"/>
    <property type="project" value="NTNU_SB"/>
</dbReference>
<dbReference type="GO" id="GO:0071339">
    <property type="term" value="C:MLL1 complex"/>
    <property type="evidence" value="ECO:0000314"/>
    <property type="project" value="UniProtKB"/>
</dbReference>
<dbReference type="GO" id="GO:0005654">
    <property type="term" value="C:nucleoplasm"/>
    <property type="evidence" value="ECO:0000314"/>
    <property type="project" value="HPA"/>
</dbReference>
<dbReference type="GO" id="GO:0005634">
    <property type="term" value="C:nucleus"/>
    <property type="evidence" value="ECO:0000314"/>
    <property type="project" value="MGI"/>
</dbReference>
<dbReference type="GO" id="GO:0090575">
    <property type="term" value="C:RNA polymerase II transcription regulator complex"/>
    <property type="evidence" value="ECO:0000314"/>
    <property type="project" value="NTNU_SB"/>
</dbReference>
<dbReference type="GO" id="GO:0000981">
    <property type="term" value="F:DNA-binding transcription factor activity, RNA polymerase II-specific"/>
    <property type="evidence" value="ECO:0000247"/>
    <property type="project" value="NTNU_SB"/>
</dbReference>
<dbReference type="GO" id="GO:0001227">
    <property type="term" value="F:DNA-binding transcription repressor activity, RNA polymerase II-specific"/>
    <property type="evidence" value="ECO:0007669"/>
    <property type="project" value="Ensembl"/>
</dbReference>
<dbReference type="GO" id="GO:0046983">
    <property type="term" value="F:protein dimerization activity"/>
    <property type="evidence" value="ECO:0007669"/>
    <property type="project" value="InterPro"/>
</dbReference>
<dbReference type="GO" id="GO:0000978">
    <property type="term" value="F:RNA polymerase II cis-regulatory region sequence-specific DNA binding"/>
    <property type="evidence" value="ECO:0000318"/>
    <property type="project" value="GO_Central"/>
</dbReference>
<dbReference type="GO" id="GO:0000122">
    <property type="term" value="P:negative regulation of transcription by RNA polymerase II"/>
    <property type="evidence" value="ECO:0000314"/>
    <property type="project" value="NTNU_SB"/>
</dbReference>
<dbReference type="GO" id="GO:0006357">
    <property type="term" value="P:regulation of transcription by RNA polymerase II"/>
    <property type="evidence" value="ECO:0000318"/>
    <property type="project" value="GO_Central"/>
</dbReference>
<dbReference type="CDD" id="cd14660">
    <property type="entry name" value="E2F_DD"/>
    <property type="match status" value="1"/>
</dbReference>
<dbReference type="FunFam" id="1.10.10.10:FF:000008">
    <property type="entry name" value="E2F transcription factor 1"/>
    <property type="match status" value="1"/>
</dbReference>
<dbReference type="Gene3D" id="6.10.250.540">
    <property type="match status" value="1"/>
</dbReference>
<dbReference type="Gene3D" id="1.10.10.10">
    <property type="entry name" value="Winged helix-like DNA-binding domain superfamily/Winged helix DNA-binding domain"/>
    <property type="match status" value="1"/>
</dbReference>
<dbReference type="InterPro" id="IPR015633">
    <property type="entry name" value="E2F"/>
</dbReference>
<dbReference type="InterPro" id="IPR037241">
    <property type="entry name" value="E2F-DP_heterodim"/>
</dbReference>
<dbReference type="InterPro" id="IPR032198">
    <property type="entry name" value="E2F_CC-MB"/>
</dbReference>
<dbReference type="InterPro" id="IPR003316">
    <property type="entry name" value="E2F_WHTH_DNA-bd_dom"/>
</dbReference>
<dbReference type="InterPro" id="IPR036388">
    <property type="entry name" value="WH-like_DNA-bd_sf"/>
</dbReference>
<dbReference type="InterPro" id="IPR036390">
    <property type="entry name" value="WH_DNA-bd_sf"/>
</dbReference>
<dbReference type="PANTHER" id="PTHR12081">
    <property type="entry name" value="TRANSCRIPTION FACTOR E2F"/>
    <property type="match status" value="1"/>
</dbReference>
<dbReference type="PANTHER" id="PTHR12081:SF19">
    <property type="entry name" value="TRANSCRIPTION FACTOR E2F6"/>
    <property type="match status" value="1"/>
</dbReference>
<dbReference type="Pfam" id="PF16421">
    <property type="entry name" value="E2F_CC-MB"/>
    <property type="match status" value="1"/>
</dbReference>
<dbReference type="Pfam" id="PF02319">
    <property type="entry name" value="E2F_TDP"/>
    <property type="match status" value="1"/>
</dbReference>
<dbReference type="SMART" id="SM01372">
    <property type="entry name" value="E2F_TDP"/>
    <property type="match status" value="1"/>
</dbReference>
<dbReference type="SUPFAM" id="SSF144074">
    <property type="entry name" value="E2F-DP heterodimerization region"/>
    <property type="match status" value="1"/>
</dbReference>
<dbReference type="SUPFAM" id="SSF46785">
    <property type="entry name" value="Winged helix' DNA-binding domain"/>
    <property type="match status" value="1"/>
</dbReference>
<name>E2F6_HUMAN</name>
<accession>O75461</accession>
<accession>A8K2Z8</accession>
<accession>G5E936</accession>
<accession>O60544</accession>
<accession>Q53QY9</accession>
<accession>Q6Q9Z6</accession>
<accession>Q7Z2H6</accession>